<protein>
    <recommendedName>
        <fullName evidence="1">Ribosome biogenesis protein BOP1 homolog</fullName>
    </recommendedName>
    <alternativeName>
        <fullName evidence="7">Pescadillo-interacting protein 1</fullName>
        <shortName evidence="6">AtPEIP1</shortName>
    </alternativeName>
    <alternativeName>
        <fullName evidence="7">Protein BLOCK OF CELL PROLIFERATION 1</fullName>
    </alternativeName>
</protein>
<keyword id="KW-0539">Nucleus</keyword>
<keyword id="KW-1185">Reference proteome</keyword>
<keyword id="KW-0677">Repeat</keyword>
<keyword id="KW-0690">Ribosome biogenesis</keyword>
<keyword id="KW-0698">rRNA processing</keyword>
<keyword id="KW-0853">WD repeat</keyword>
<sequence length="753" mass="85383">MTKRSKGANEDKLIETKSKNVSGKSQKQKKPVEAESLKEEDLLQASGTDSDYDGDSLPGSLNSDDFDSDFSDSEDDGTHEGTEDGDVEFSDDDDVLEHDGSIDNEDDDGSEHVGSDNNEEHGSDEDSERGEAVEESDSSEDEVPSRNTVGNVPLKWYEDEKHIGYDLTGKKITKKEKQDKLDSFLATIDDSKTWRKIYDEYNDEDVELTKEESKIVQRILKGEAPHADFDPYAPYVEWFKHDDAIHPLSSAPEPKRRFIPSKWEAKKVVKIVRAIRKGWIKFDKPEEEPNVYLLWGDDSTSDQKSKHLTYIPPPKLKLPGHDESYNPSLEYIPTEEEKASYELMFEEDRPKFIPTRFTSLRSIPAYENALKESFERCLDLYLCPRVRKKRINIDPESLKPKLPSRKDLRPYPNSCYLEYKGHTGAVTSISTDSSGEWIASGSTDGSVRMWEVETGRCLKVWQFDEAIMCVAWNPLSRLPVLAVAMGRDLFFLNTELGTDEEQEITKERLHSGNIPEPDASVAAIVTWLPDELYGGIKIRHFKSISSIDWHRKGDYLSTVMASGETRGVVLHQLSKQKTQRLPFKIRGLPVCTLFHPSLSYFFVATRKDVRVYNLLKPGEATKKLETGLREISSMAIHPGGDNLIVGSKEGKMCWFDMDLSSKPYKTLKNHPKDITNVAVHRSYPLFASCSEDSTAYVFHGMVYNDLNQNPLIVPLEILRGHSSKGGVLDCKFHPRQPWLFTAGADSIIKLYCH</sequence>
<organism>
    <name type="scientific">Arabidopsis thaliana</name>
    <name type="common">Mouse-ear cress</name>
    <dbReference type="NCBI Taxonomy" id="3702"/>
    <lineage>
        <taxon>Eukaryota</taxon>
        <taxon>Viridiplantae</taxon>
        <taxon>Streptophyta</taxon>
        <taxon>Embryophyta</taxon>
        <taxon>Tracheophyta</taxon>
        <taxon>Spermatophyta</taxon>
        <taxon>Magnoliopsida</taxon>
        <taxon>eudicotyledons</taxon>
        <taxon>Gunneridae</taxon>
        <taxon>Pentapetalae</taxon>
        <taxon>rosids</taxon>
        <taxon>malvids</taxon>
        <taxon>Brassicales</taxon>
        <taxon>Brassicaceae</taxon>
        <taxon>Camelineae</taxon>
        <taxon>Arabidopsis</taxon>
    </lineage>
</organism>
<reference key="1">
    <citation type="journal article" date="1999" name="Nature">
        <title>Sequence and analysis of chromosome 2 of the plant Arabidopsis thaliana.</title>
        <authorList>
            <person name="Lin X."/>
            <person name="Kaul S."/>
            <person name="Rounsley S.D."/>
            <person name="Shea T.P."/>
            <person name="Benito M.-I."/>
            <person name="Town C.D."/>
            <person name="Fujii C.Y."/>
            <person name="Mason T.M."/>
            <person name="Bowman C.L."/>
            <person name="Barnstead M.E."/>
            <person name="Feldblyum T.V."/>
            <person name="Buell C.R."/>
            <person name="Ketchum K.A."/>
            <person name="Lee J.J."/>
            <person name="Ronning C.M."/>
            <person name="Koo H.L."/>
            <person name="Moffat K.S."/>
            <person name="Cronin L.A."/>
            <person name="Shen M."/>
            <person name="Pai G."/>
            <person name="Van Aken S."/>
            <person name="Umayam L."/>
            <person name="Tallon L.J."/>
            <person name="Gill J.E."/>
            <person name="Adams M.D."/>
            <person name="Carrera A.J."/>
            <person name="Creasy T.H."/>
            <person name="Goodman H.M."/>
            <person name="Somerville C.R."/>
            <person name="Copenhaver G.P."/>
            <person name="Preuss D."/>
            <person name="Nierman W.C."/>
            <person name="White O."/>
            <person name="Eisen J.A."/>
            <person name="Salzberg S.L."/>
            <person name="Fraser C.M."/>
            <person name="Venter J.C."/>
        </authorList>
    </citation>
    <scope>NUCLEOTIDE SEQUENCE [LARGE SCALE GENOMIC DNA]</scope>
    <source>
        <strain>cv. Columbia</strain>
    </source>
</reference>
<reference key="2">
    <citation type="journal article" date="2017" name="Plant J.">
        <title>Araport11: a complete reannotation of the Arabidopsis thaliana reference genome.</title>
        <authorList>
            <person name="Cheng C.Y."/>
            <person name="Krishnakumar V."/>
            <person name="Chan A.P."/>
            <person name="Thibaud-Nissen F."/>
            <person name="Schobel S."/>
            <person name="Town C.D."/>
        </authorList>
    </citation>
    <scope>GENOME REANNOTATION</scope>
    <source>
        <strain>cv. Columbia</strain>
    </source>
</reference>
<reference key="3">
    <citation type="journal article" date="2007" name="Mol. Cell. Proteomics">
        <title>Multidimensional protein identification technology (MudPIT) analysis of ubiquitinated proteins in plants.</title>
        <authorList>
            <person name="Maor R."/>
            <person name="Jones A."/>
            <person name="Nuehse T.S."/>
            <person name="Studholme D.J."/>
            <person name="Peck S.C."/>
            <person name="Shirasu K."/>
        </authorList>
    </citation>
    <scope>IDENTIFICATION BY MASS SPECTROMETRY [LARGE SCALE ANALYSIS]</scope>
    <source>
        <strain>cv. Landsberg erecta</strain>
    </source>
</reference>
<reference key="4">
    <citation type="journal article" date="2013" name="Plant J.">
        <title>Pescadillo plays an essential role in plant cell growth and survival by modulating ribosome biogenesis.</title>
        <authorList>
            <person name="Cho H.K."/>
            <person name="Ahn C.S."/>
            <person name="Lee H.S."/>
            <person name="Kim J.K."/>
            <person name="Pai H.S."/>
        </authorList>
    </citation>
    <scope>INTERACTION WITH PES AND WDR12</scope>
    <scope>SUBCELLULAR LOCATION</scope>
</reference>
<reference key="5">
    <citation type="journal article" date="2014" name="Plant Sci.">
        <title>Transcriptional regulation and functional involvement of the Arabidopsis pescadillo ortholog AtPES in root development.</title>
        <authorList>
            <person name="Zografidis A."/>
            <person name="Kapolas G."/>
            <person name="Podia V."/>
            <person name="Beri D."/>
            <person name="Papadopoulou K."/>
            <person name="Milioni D."/>
            <person name="Haralampidis K."/>
        </authorList>
    </citation>
    <scope>INTERACTION WITH PES</scope>
    <scope>SUBCELLULAR LOCATION</scope>
</reference>
<reference key="6">
    <citation type="journal article" date="2016" name="Plant Sci.">
        <title>Analysis of Block of cell proliferation 1 (BOP1) activity in strawberry and Arabidopsis.</title>
        <authorList>
            <person name="Carvalho S.D."/>
            <person name="Chatterjee M."/>
            <person name="Coleman L."/>
            <person name="Clancy M.A."/>
            <person name="Folta K.M."/>
        </authorList>
    </citation>
    <scope>FUNCTION</scope>
    <scope>DISRUPTION PHENOTYPE</scope>
</reference>
<comment type="function">
    <text evidence="1 5">Required for maturation of ribosomal RNAs and formation of the large ribosomal subunit (By similarity). Plays an essential role in cell growth and survival through its regulation of ribosome biogenesis and mitotic progression (PubMed:26940494).</text>
</comment>
<comment type="subunit">
    <text evidence="3 4">Interacts with PES (PubMed:23909681, PubMed:25443833). Interacts with WDR12 (PubMed:23909681).</text>
</comment>
<comment type="subcellular location">
    <subcellularLocation>
        <location evidence="1 3 4">Nucleus</location>
        <location evidence="1 3 4">Nucleolus</location>
    </subcellularLocation>
    <subcellularLocation>
        <location evidence="1">Nucleus</location>
        <location evidence="1">Nucleoplasm</location>
    </subcellularLocation>
</comment>
<comment type="disruption phenotype">
    <text evidence="5">Embryonic lethality when homozygous.</text>
</comment>
<comment type="similarity">
    <text evidence="1">Belongs to the WD repeat BOP1/ERB1 family.</text>
</comment>
<comment type="sequence caution" evidence="7">
    <conflict type="erroneous gene model prediction">
        <sequence resource="EMBL-CDS" id="AAD25679"/>
    </conflict>
</comment>
<feature type="chain" id="PRO_0000437494" description="Ribosome biogenesis protein BOP1 homolog">
    <location>
        <begin position="1"/>
        <end position="753"/>
    </location>
</feature>
<feature type="repeat" description="WD 1" evidence="1">
    <location>
        <begin position="421"/>
        <end position="462"/>
    </location>
</feature>
<feature type="repeat" description="WD 2" evidence="1">
    <location>
        <begin position="464"/>
        <end position="502"/>
    </location>
</feature>
<feature type="repeat" description="WD 3" evidence="1">
    <location>
        <begin position="539"/>
        <end position="581"/>
    </location>
</feature>
<feature type="repeat" description="WD 4" evidence="1">
    <location>
        <begin position="626"/>
        <end position="665"/>
    </location>
</feature>
<feature type="repeat" description="WD 5" evidence="1">
    <location>
        <begin position="669"/>
        <end position="708"/>
    </location>
</feature>
<feature type="repeat" description="WD 6" evidence="1">
    <location>
        <begin position="722"/>
        <end position="753"/>
    </location>
</feature>
<feature type="region of interest" description="Disordered" evidence="2">
    <location>
        <begin position="1"/>
        <end position="155"/>
    </location>
</feature>
<feature type="compositionally biased region" description="Basic and acidic residues" evidence="2">
    <location>
        <begin position="7"/>
        <end position="18"/>
    </location>
</feature>
<feature type="compositionally biased region" description="Basic and acidic residues" evidence="2">
    <location>
        <begin position="30"/>
        <end position="41"/>
    </location>
</feature>
<feature type="compositionally biased region" description="Acidic residues" evidence="2">
    <location>
        <begin position="64"/>
        <end position="75"/>
    </location>
</feature>
<feature type="compositionally biased region" description="Acidic residues" evidence="2">
    <location>
        <begin position="83"/>
        <end position="109"/>
    </location>
</feature>
<feature type="compositionally biased region" description="Basic and acidic residues" evidence="2">
    <location>
        <begin position="110"/>
        <end position="121"/>
    </location>
</feature>
<feature type="compositionally biased region" description="Acidic residues" evidence="2">
    <location>
        <begin position="122"/>
        <end position="142"/>
    </location>
</feature>
<name>BOP1_ARATH</name>
<accession>F4IH25</accession>
<accession>Q9SIY9</accession>
<proteinExistence type="evidence at protein level"/>
<gene>
    <name evidence="7" type="primary">BOP1</name>
    <name evidence="6" type="synonym">PEIP1</name>
    <name evidence="8" type="ordered locus">At2g40360</name>
</gene>
<dbReference type="EMBL" id="AC007020">
    <property type="protein sequence ID" value="AAD25679.1"/>
    <property type="status" value="ALT_SEQ"/>
    <property type="molecule type" value="Genomic_DNA"/>
</dbReference>
<dbReference type="EMBL" id="CP002685">
    <property type="protein sequence ID" value="AEC09818.1"/>
    <property type="molecule type" value="Genomic_DNA"/>
</dbReference>
<dbReference type="PIR" id="E84828">
    <property type="entry name" value="E84828"/>
</dbReference>
<dbReference type="RefSeq" id="NP_181567.3">
    <property type="nucleotide sequence ID" value="NM_129596.4"/>
</dbReference>
<dbReference type="SMR" id="F4IH25"/>
<dbReference type="FunCoup" id="F4IH25">
    <property type="interactions" value="3668"/>
</dbReference>
<dbReference type="STRING" id="3702.F4IH25"/>
<dbReference type="PaxDb" id="3702-AT2G40360.1"/>
<dbReference type="EnsemblPlants" id="AT2G40360.1">
    <property type="protein sequence ID" value="AT2G40360.1"/>
    <property type="gene ID" value="AT2G40360"/>
</dbReference>
<dbReference type="GeneID" id="818629"/>
<dbReference type="Gramene" id="AT2G40360.1">
    <property type="protein sequence ID" value="AT2G40360.1"/>
    <property type="gene ID" value="AT2G40360"/>
</dbReference>
<dbReference type="KEGG" id="ath:AT2G40360"/>
<dbReference type="Araport" id="AT2G40360"/>
<dbReference type="TAIR" id="AT2G40360">
    <property type="gene designation" value="ATPEP1"/>
</dbReference>
<dbReference type="eggNOG" id="KOG0650">
    <property type="taxonomic scope" value="Eukaryota"/>
</dbReference>
<dbReference type="HOGENOM" id="CLU_011390_2_0_1"/>
<dbReference type="InParanoid" id="F4IH25"/>
<dbReference type="OMA" id="MRPAKGE"/>
<dbReference type="CD-CODE" id="4299E36E">
    <property type="entry name" value="Nucleolus"/>
</dbReference>
<dbReference type="PRO" id="PR:F4IH25"/>
<dbReference type="Proteomes" id="UP000006548">
    <property type="component" value="Chromosome 2"/>
</dbReference>
<dbReference type="ExpressionAtlas" id="F4IH25">
    <property type="expression patterns" value="baseline and differential"/>
</dbReference>
<dbReference type="GO" id="GO:0005730">
    <property type="term" value="C:nucleolus"/>
    <property type="evidence" value="ECO:0000314"/>
    <property type="project" value="UniProtKB"/>
</dbReference>
<dbReference type="GO" id="GO:0005654">
    <property type="term" value="C:nucleoplasm"/>
    <property type="evidence" value="ECO:0007669"/>
    <property type="project" value="UniProtKB-SubCell"/>
</dbReference>
<dbReference type="GO" id="GO:0030687">
    <property type="term" value="C:preribosome, large subunit precursor"/>
    <property type="evidence" value="ECO:0007669"/>
    <property type="project" value="UniProtKB-UniRule"/>
</dbReference>
<dbReference type="GO" id="GO:0043021">
    <property type="term" value="F:ribonucleoprotein complex binding"/>
    <property type="evidence" value="ECO:0007669"/>
    <property type="project" value="UniProtKB-UniRule"/>
</dbReference>
<dbReference type="GO" id="GO:0007276">
    <property type="term" value="P:gamete generation"/>
    <property type="evidence" value="ECO:0000315"/>
    <property type="project" value="TAIR"/>
</dbReference>
<dbReference type="GO" id="GO:0000466">
    <property type="term" value="P:maturation of 5.8S rRNA from tricistronic rRNA transcript (SSU-rRNA, 5.8S rRNA, LSU-rRNA)"/>
    <property type="evidence" value="ECO:0007669"/>
    <property type="project" value="UniProtKB-UniRule"/>
</dbReference>
<dbReference type="GO" id="GO:0000463">
    <property type="term" value="P:maturation of LSU-rRNA from tricistronic rRNA transcript (SSU-rRNA, 5.8S rRNA, LSU-rRNA)"/>
    <property type="evidence" value="ECO:0007669"/>
    <property type="project" value="UniProtKB-UniRule"/>
</dbReference>
<dbReference type="GO" id="GO:0051302">
    <property type="term" value="P:regulation of cell division"/>
    <property type="evidence" value="ECO:0000315"/>
    <property type="project" value="TAIR"/>
</dbReference>
<dbReference type="FunFam" id="2.130.10.10:FF:000061">
    <property type="entry name" value="Ribosome biogenesis protein BOP1 homolog"/>
    <property type="match status" value="1"/>
</dbReference>
<dbReference type="Gene3D" id="2.130.10.10">
    <property type="entry name" value="YVTN repeat-like/Quinoprotein amine dehydrogenase"/>
    <property type="match status" value="1"/>
</dbReference>
<dbReference type="HAMAP" id="MF_03027">
    <property type="entry name" value="BOP1"/>
    <property type="match status" value="1"/>
</dbReference>
<dbReference type="InterPro" id="IPR028598">
    <property type="entry name" value="BOP1/Erb1"/>
</dbReference>
<dbReference type="InterPro" id="IPR012953">
    <property type="entry name" value="BOP1_N_dom"/>
</dbReference>
<dbReference type="InterPro" id="IPR015943">
    <property type="entry name" value="WD40/YVTN_repeat-like_dom_sf"/>
</dbReference>
<dbReference type="InterPro" id="IPR019775">
    <property type="entry name" value="WD40_repeat_CS"/>
</dbReference>
<dbReference type="InterPro" id="IPR036322">
    <property type="entry name" value="WD40_repeat_dom_sf"/>
</dbReference>
<dbReference type="InterPro" id="IPR001680">
    <property type="entry name" value="WD40_rpt"/>
</dbReference>
<dbReference type="PANTHER" id="PTHR17605:SF0">
    <property type="entry name" value="RIBOSOME BIOGENESIS PROTEIN BOP1"/>
    <property type="match status" value="1"/>
</dbReference>
<dbReference type="PANTHER" id="PTHR17605">
    <property type="entry name" value="RIBOSOME BIOGENESIS PROTEIN BOP1 BLOCK OF PROLIFERATION 1 PROTEIN"/>
    <property type="match status" value="1"/>
</dbReference>
<dbReference type="Pfam" id="PF08145">
    <property type="entry name" value="BOP1NT"/>
    <property type="match status" value="1"/>
</dbReference>
<dbReference type="Pfam" id="PF00400">
    <property type="entry name" value="WD40"/>
    <property type="match status" value="3"/>
</dbReference>
<dbReference type="SMART" id="SM01035">
    <property type="entry name" value="BOP1NT"/>
    <property type="match status" value="1"/>
</dbReference>
<dbReference type="SMART" id="SM00320">
    <property type="entry name" value="WD40"/>
    <property type="match status" value="6"/>
</dbReference>
<dbReference type="SUPFAM" id="SSF50978">
    <property type="entry name" value="WD40 repeat-like"/>
    <property type="match status" value="1"/>
</dbReference>
<dbReference type="PROSITE" id="PS00678">
    <property type="entry name" value="WD_REPEATS_1"/>
    <property type="match status" value="1"/>
</dbReference>
<dbReference type="PROSITE" id="PS50082">
    <property type="entry name" value="WD_REPEATS_2"/>
    <property type="match status" value="1"/>
</dbReference>
<dbReference type="PROSITE" id="PS50294">
    <property type="entry name" value="WD_REPEATS_REGION"/>
    <property type="match status" value="2"/>
</dbReference>
<evidence type="ECO:0000255" key="1">
    <source>
        <dbReference type="HAMAP-Rule" id="MF_03027"/>
    </source>
</evidence>
<evidence type="ECO:0000256" key="2">
    <source>
        <dbReference type="SAM" id="MobiDB-lite"/>
    </source>
</evidence>
<evidence type="ECO:0000269" key="3">
    <source>
    </source>
</evidence>
<evidence type="ECO:0000269" key="4">
    <source>
    </source>
</evidence>
<evidence type="ECO:0000269" key="5">
    <source>
    </source>
</evidence>
<evidence type="ECO:0000303" key="6">
    <source>
    </source>
</evidence>
<evidence type="ECO:0000305" key="7"/>
<evidence type="ECO:0000312" key="8">
    <source>
        <dbReference type="Araport" id="AT2G40360"/>
    </source>
</evidence>